<keyword id="KW-0067">ATP-binding</keyword>
<keyword id="KW-0963">Cytoplasm</keyword>
<keyword id="KW-0418">Kinase</keyword>
<keyword id="KW-0460">Magnesium</keyword>
<keyword id="KW-0479">Metal-binding</keyword>
<keyword id="KW-0547">Nucleotide-binding</keyword>
<keyword id="KW-0539">Nucleus</keyword>
<keyword id="KW-0597">Phosphoprotein</keyword>
<keyword id="KW-1185">Reference proteome</keyword>
<keyword id="KW-0690">Ribosome biogenesis</keyword>
<keyword id="KW-0723">Serine/threonine-protein kinase</keyword>
<keyword id="KW-0808">Transferase</keyword>
<sequence length="344" mass="39840">MVNLNIKAMRYLSAEDFRTLTAVEMGSRNHEVVPTNMINQIAKIRGGSCTKSLSVLFMHKLIAKVPHISYEGYRLTYAGYDYLALKALSKRASVYSVGNQIGVGKESDVYVVGDQKGKQYILKIHRLGRISFRSVKNNRDYLRNRKTGSWQYLSRLAATKEFAFMKILHEHGFPVPAPIDHSRHCIIMEMIDAFPLRAVTDIRDPPALYQTLMDIIVRFARNGLIHGDFNEFNIIVREDGTAVVIDFPQMVSTSHPDAQFYFDRDVQCIVQYFEKNYQYKGDVPNFEDISKMEKENNLDIMIEASGFNKKQSKELEKYRQEEEKRKENGDDLSDNYEEEEEEKE</sequence>
<gene>
    <name type="primary">rio2</name>
    <name type="ORF">SPBC1703.05</name>
</gene>
<accession>Q9P7W5</accession>
<feature type="chain" id="PRO_0000373995" description="Serine/threonine-protein kinase rio2">
    <location>
        <begin position="1"/>
        <end position="344"/>
    </location>
</feature>
<feature type="domain" description="Protein kinase">
    <location>
        <begin position="95"/>
        <end position="250"/>
    </location>
</feature>
<feature type="region of interest" description="Disordered" evidence="2">
    <location>
        <begin position="311"/>
        <end position="344"/>
    </location>
</feature>
<feature type="compositionally biased region" description="Basic and acidic residues" evidence="2">
    <location>
        <begin position="311"/>
        <end position="329"/>
    </location>
</feature>
<feature type="compositionally biased region" description="Acidic residues" evidence="2">
    <location>
        <begin position="330"/>
        <end position="344"/>
    </location>
</feature>
<feature type="active site" description="Proton acceptor" evidence="1">
    <location>
        <position position="228"/>
    </location>
</feature>
<feature type="binding site" evidence="1">
    <location>
        <position position="123"/>
    </location>
    <ligand>
        <name>ATP</name>
        <dbReference type="ChEBI" id="CHEBI:30616"/>
    </ligand>
</feature>
<dbReference type="EC" id="2.7.11.1"/>
<dbReference type="EMBL" id="CU329671">
    <property type="protein sequence ID" value="CAB66449.2"/>
    <property type="molecule type" value="Genomic_DNA"/>
</dbReference>
<dbReference type="PIR" id="T50318">
    <property type="entry name" value="T50318"/>
</dbReference>
<dbReference type="RefSeq" id="NP_596200.2">
    <property type="nucleotide sequence ID" value="NM_001022119.2"/>
</dbReference>
<dbReference type="SMR" id="Q9P7W5"/>
<dbReference type="BioGRID" id="276501">
    <property type="interactions" value="2"/>
</dbReference>
<dbReference type="FunCoup" id="Q9P7W5">
    <property type="interactions" value="902"/>
</dbReference>
<dbReference type="STRING" id="284812.Q9P7W5"/>
<dbReference type="iPTMnet" id="Q9P7W5"/>
<dbReference type="PaxDb" id="4896-SPBC1703.05.1"/>
<dbReference type="EnsemblFungi" id="SPBC1703.05.1">
    <property type="protein sequence ID" value="SPBC1703.05.1:pep"/>
    <property type="gene ID" value="SPBC1703.05"/>
</dbReference>
<dbReference type="GeneID" id="2539957"/>
<dbReference type="KEGG" id="spo:2539957"/>
<dbReference type="PomBase" id="SPBC1703.05">
    <property type="gene designation" value="rio2"/>
</dbReference>
<dbReference type="VEuPathDB" id="FungiDB:SPBC1703.05"/>
<dbReference type="eggNOG" id="KOG2268">
    <property type="taxonomic scope" value="Eukaryota"/>
</dbReference>
<dbReference type="HOGENOM" id="CLU_018693_0_0_1"/>
<dbReference type="InParanoid" id="Q9P7W5"/>
<dbReference type="OMA" id="GYTNFRE"/>
<dbReference type="PRO" id="PR:Q9P7W5"/>
<dbReference type="Proteomes" id="UP000002485">
    <property type="component" value="Chromosome II"/>
</dbReference>
<dbReference type="GO" id="GO:0005829">
    <property type="term" value="C:cytosol"/>
    <property type="evidence" value="ECO:0007005"/>
    <property type="project" value="PomBase"/>
</dbReference>
<dbReference type="GO" id="GO:0005634">
    <property type="term" value="C:nucleus"/>
    <property type="evidence" value="ECO:0007005"/>
    <property type="project" value="PomBase"/>
</dbReference>
<dbReference type="GO" id="GO:0030688">
    <property type="term" value="C:preribosome, small subunit precursor"/>
    <property type="evidence" value="ECO:0000318"/>
    <property type="project" value="GO_Central"/>
</dbReference>
<dbReference type="GO" id="GO:0005524">
    <property type="term" value="F:ATP binding"/>
    <property type="evidence" value="ECO:0007669"/>
    <property type="project" value="UniProtKB-KW"/>
</dbReference>
<dbReference type="GO" id="GO:0046872">
    <property type="term" value="F:metal ion binding"/>
    <property type="evidence" value="ECO:0007669"/>
    <property type="project" value="UniProtKB-KW"/>
</dbReference>
<dbReference type="GO" id="GO:0004672">
    <property type="term" value="F:protein kinase activity"/>
    <property type="evidence" value="ECO:0000318"/>
    <property type="project" value="GO_Central"/>
</dbReference>
<dbReference type="GO" id="GO:0106310">
    <property type="term" value="F:protein serine kinase activity"/>
    <property type="evidence" value="ECO:0007669"/>
    <property type="project" value="RHEA"/>
</dbReference>
<dbReference type="GO" id="GO:0004674">
    <property type="term" value="F:protein serine/threonine kinase activity"/>
    <property type="evidence" value="ECO:0000255"/>
    <property type="project" value="PomBase"/>
</dbReference>
<dbReference type="GO" id="GO:0030490">
    <property type="term" value="P:maturation of SSU-rRNA"/>
    <property type="evidence" value="ECO:0000318"/>
    <property type="project" value="GO_Central"/>
</dbReference>
<dbReference type="CDD" id="cd05144">
    <property type="entry name" value="RIO2_C"/>
    <property type="match status" value="1"/>
</dbReference>
<dbReference type="FunFam" id="1.10.510.10:FF:000601">
    <property type="entry name" value="Atypical/RIO/RIO2 protein kinase"/>
    <property type="match status" value="1"/>
</dbReference>
<dbReference type="FunFam" id="1.10.10.10:FF:000053">
    <property type="entry name" value="Serine/threonine-protein kinase RIO2"/>
    <property type="match status" value="1"/>
</dbReference>
<dbReference type="FunFam" id="3.30.200.20:FF:000052">
    <property type="entry name" value="Serine/threonine-protein kinase RIO2"/>
    <property type="match status" value="1"/>
</dbReference>
<dbReference type="Gene3D" id="3.30.200.20">
    <property type="entry name" value="Phosphorylase Kinase, domain 1"/>
    <property type="match status" value="1"/>
</dbReference>
<dbReference type="Gene3D" id="1.10.510.10">
    <property type="entry name" value="Transferase(Phosphotransferase) domain 1"/>
    <property type="match status" value="1"/>
</dbReference>
<dbReference type="Gene3D" id="1.10.10.10">
    <property type="entry name" value="Winged helix-like DNA-binding domain superfamily/Winged helix DNA-binding domain"/>
    <property type="match status" value="1"/>
</dbReference>
<dbReference type="InterPro" id="IPR011009">
    <property type="entry name" value="Kinase-like_dom_sf"/>
</dbReference>
<dbReference type="InterPro" id="IPR030484">
    <property type="entry name" value="Rio2"/>
</dbReference>
<dbReference type="InterPro" id="IPR015285">
    <property type="entry name" value="RIO2_wHTH_N"/>
</dbReference>
<dbReference type="InterPro" id="IPR018934">
    <property type="entry name" value="RIO_dom"/>
</dbReference>
<dbReference type="InterPro" id="IPR000687">
    <property type="entry name" value="RIO_kinase"/>
</dbReference>
<dbReference type="InterPro" id="IPR018935">
    <property type="entry name" value="RIO_kinase_CS"/>
</dbReference>
<dbReference type="InterPro" id="IPR036388">
    <property type="entry name" value="WH-like_DNA-bd_sf"/>
</dbReference>
<dbReference type="InterPro" id="IPR036390">
    <property type="entry name" value="WH_DNA-bd_sf"/>
</dbReference>
<dbReference type="PANTHER" id="PTHR45852">
    <property type="entry name" value="SER/THR-PROTEIN KINASE RIO2"/>
    <property type="match status" value="1"/>
</dbReference>
<dbReference type="PANTHER" id="PTHR45852:SF1">
    <property type="entry name" value="SERINE_THREONINE-PROTEIN KINASE RIO2"/>
    <property type="match status" value="1"/>
</dbReference>
<dbReference type="Pfam" id="PF01163">
    <property type="entry name" value="RIO1"/>
    <property type="match status" value="1"/>
</dbReference>
<dbReference type="Pfam" id="PF09202">
    <property type="entry name" value="Rio2_N"/>
    <property type="match status" value="1"/>
</dbReference>
<dbReference type="SMART" id="SM00090">
    <property type="entry name" value="RIO"/>
    <property type="match status" value="1"/>
</dbReference>
<dbReference type="SUPFAM" id="SSF56112">
    <property type="entry name" value="Protein kinase-like (PK-like)"/>
    <property type="match status" value="1"/>
</dbReference>
<dbReference type="SUPFAM" id="SSF46785">
    <property type="entry name" value="Winged helix' DNA-binding domain"/>
    <property type="match status" value="1"/>
</dbReference>
<dbReference type="PROSITE" id="PS01245">
    <property type="entry name" value="RIO1"/>
    <property type="match status" value="1"/>
</dbReference>
<name>RIO2_SCHPO</name>
<protein>
    <recommendedName>
        <fullName>Serine/threonine-protein kinase rio2</fullName>
        <ecNumber>2.7.11.1</ecNumber>
    </recommendedName>
</protein>
<organism>
    <name type="scientific">Schizosaccharomyces pombe (strain 972 / ATCC 24843)</name>
    <name type="common">Fission yeast</name>
    <dbReference type="NCBI Taxonomy" id="284812"/>
    <lineage>
        <taxon>Eukaryota</taxon>
        <taxon>Fungi</taxon>
        <taxon>Dikarya</taxon>
        <taxon>Ascomycota</taxon>
        <taxon>Taphrinomycotina</taxon>
        <taxon>Schizosaccharomycetes</taxon>
        <taxon>Schizosaccharomycetales</taxon>
        <taxon>Schizosaccharomycetaceae</taxon>
        <taxon>Schizosaccharomyces</taxon>
    </lineage>
</organism>
<proteinExistence type="inferred from homology"/>
<reference key="1">
    <citation type="journal article" date="2002" name="Nature">
        <title>The genome sequence of Schizosaccharomyces pombe.</title>
        <authorList>
            <person name="Wood V."/>
            <person name="Gwilliam R."/>
            <person name="Rajandream M.A."/>
            <person name="Lyne M.H."/>
            <person name="Lyne R."/>
            <person name="Stewart A."/>
            <person name="Sgouros J.G."/>
            <person name="Peat N."/>
            <person name="Hayles J."/>
            <person name="Baker S.G."/>
            <person name="Basham D."/>
            <person name="Bowman S."/>
            <person name="Brooks K."/>
            <person name="Brown D."/>
            <person name="Brown S."/>
            <person name="Chillingworth T."/>
            <person name="Churcher C.M."/>
            <person name="Collins M."/>
            <person name="Connor R."/>
            <person name="Cronin A."/>
            <person name="Davis P."/>
            <person name="Feltwell T."/>
            <person name="Fraser A."/>
            <person name="Gentles S."/>
            <person name="Goble A."/>
            <person name="Hamlin N."/>
            <person name="Harris D.E."/>
            <person name="Hidalgo J."/>
            <person name="Hodgson G."/>
            <person name="Holroyd S."/>
            <person name="Hornsby T."/>
            <person name="Howarth S."/>
            <person name="Huckle E.J."/>
            <person name="Hunt S."/>
            <person name="Jagels K."/>
            <person name="James K.D."/>
            <person name="Jones L."/>
            <person name="Jones M."/>
            <person name="Leather S."/>
            <person name="McDonald S."/>
            <person name="McLean J."/>
            <person name="Mooney P."/>
            <person name="Moule S."/>
            <person name="Mungall K.L."/>
            <person name="Murphy L.D."/>
            <person name="Niblett D."/>
            <person name="Odell C."/>
            <person name="Oliver K."/>
            <person name="O'Neil S."/>
            <person name="Pearson D."/>
            <person name="Quail M.A."/>
            <person name="Rabbinowitsch E."/>
            <person name="Rutherford K.M."/>
            <person name="Rutter S."/>
            <person name="Saunders D."/>
            <person name="Seeger K."/>
            <person name="Sharp S."/>
            <person name="Skelton J."/>
            <person name="Simmonds M.N."/>
            <person name="Squares R."/>
            <person name="Squares S."/>
            <person name="Stevens K."/>
            <person name="Taylor K."/>
            <person name="Taylor R.G."/>
            <person name="Tivey A."/>
            <person name="Walsh S.V."/>
            <person name="Warren T."/>
            <person name="Whitehead S."/>
            <person name="Woodward J.R."/>
            <person name="Volckaert G."/>
            <person name="Aert R."/>
            <person name="Robben J."/>
            <person name="Grymonprez B."/>
            <person name="Weltjens I."/>
            <person name="Vanstreels E."/>
            <person name="Rieger M."/>
            <person name="Schaefer M."/>
            <person name="Mueller-Auer S."/>
            <person name="Gabel C."/>
            <person name="Fuchs M."/>
            <person name="Duesterhoeft A."/>
            <person name="Fritzc C."/>
            <person name="Holzer E."/>
            <person name="Moestl D."/>
            <person name="Hilbert H."/>
            <person name="Borzym K."/>
            <person name="Langer I."/>
            <person name="Beck A."/>
            <person name="Lehrach H."/>
            <person name="Reinhardt R."/>
            <person name="Pohl T.M."/>
            <person name="Eger P."/>
            <person name="Zimmermann W."/>
            <person name="Wedler H."/>
            <person name="Wambutt R."/>
            <person name="Purnelle B."/>
            <person name="Goffeau A."/>
            <person name="Cadieu E."/>
            <person name="Dreano S."/>
            <person name="Gloux S."/>
            <person name="Lelaure V."/>
            <person name="Mottier S."/>
            <person name="Galibert F."/>
            <person name="Aves S.J."/>
            <person name="Xiang Z."/>
            <person name="Hunt C."/>
            <person name="Moore K."/>
            <person name="Hurst S.M."/>
            <person name="Lucas M."/>
            <person name="Rochet M."/>
            <person name="Gaillardin C."/>
            <person name="Tallada V.A."/>
            <person name="Garzon A."/>
            <person name="Thode G."/>
            <person name="Daga R.R."/>
            <person name="Cruzado L."/>
            <person name="Jimenez J."/>
            <person name="Sanchez M."/>
            <person name="del Rey F."/>
            <person name="Benito J."/>
            <person name="Dominguez A."/>
            <person name="Revuelta J.L."/>
            <person name="Moreno S."/>
            <person name="Armstrong J."/>
            <person name="Forsburg S.L."/>
            <person name="Cerutti L."/>
            <person name="Lowe T."/>
            <person name="McCombie W.R."/>
            <person name="Paulsen I."/>
            <person name="Potashkin J."/>
            <person name="Shpakovski G.V."/>
            <person name="Ussery D."/>
            <person name="Barrell B.G."/>
            <person name="Nurse P."/>
        </authorList>
    </citation>
    <scope>NUCLEOTIDE SEQUENCE [LARGE SCALE GENOMIC DNA]</scope>
    <source>
        <strain>972 / ATCC 24843</strain>
    </source>
</reference>
<reference key="2">
    <citation type="journal article" date="2011" name="Science">
        <title>Comparative functional genomics of the fission yeasts.</title>
        <authorList>
            <person name="Rhind N."/>
            <person name="Chen Z."/>
            <person name="Yassour M."/>
            <person name="Thompson D.A."/>
            <person name="Haas B.J."/>
            <person name="Habib N."/>
            <person name="Wapinski I."/>
            <person name="Roy S."/>
            <person name="Lin M.F."/>
            <person name="Heiman D.I."/>
            <person name="Young S.K."/>
            <person name="Furuya K."/>
            <person name="Guo Y."/>
            <person name="Pidoux A."/>
            <person name="Chen H.M."/>
            <person name="Robbertse B."/>
            <person name="Goldberg J.M."/>
            <person name="Aoki K."/>
            <person name="Bayne E.H."/>
            <person name="Berlin A.M."/>
            <person name="Desjardins C.A."/>
            <person name="Dobbs E."/>
            <person name="Dukaj L."/>
            <person name="Fan L."/>
            <person name="FitzGerald M.G."/>
            <person name="French C."/>
            <person name="Gujja S."/>
            <person name="Hansen K."/>
            <person name="Keifenheim D."/>
            <person name="Levin J.Z."/>
            <person name="Mosher R.A."/>
            <person name="Mueller C.A."/>
            <person name="Pfiffner J."/>
            <person name="Priest M."/>
            <person name="Russ C."/>
            <person name="Smialowska A."/>
            <person name="Swoboda P."/>
            <person name="Sykes S.M."/>
            <person name="Vaughn M."/>
            <person name="Vengrova S."/>
            <person name="Yoder R."/>
            <person name="Zeng Q."/>
            <person name="Allshire R."/>
            <person name="Baulcombe D."/>
            <person name="Birren B.W."/>
            <person name="Brown W."/>
            <person name="Ekwall K."/>
            <person name="Kellis M."/>
            <person name="Leatherwood J."/>
            <person name="Levin H."/>
            <person name="Margalit H."/>
            <person name="Martienssen R."/>
            <person name="Nieduszynski C.A."/>
            <person name="Spatafora J.W."/>
            <person name="Friedman N."/>
            <person name="Dalgaard J.Z."/>
            <person name="Baumann P."/>
            <person name="Niki H."/>
            <person name="Regev A."/>
            <person name="Nusbaum C."/>
        </authorList>
    </citation>
    <scope>REVISION OF GENE MODEL</scope>
</reference>
<reference key="3">
    <citation type="journal article" date="2006" name="Nat. Biotechnol.">
        <title>ORFeome cloning and global analysis of protein localization in the fission yeast Schizosaccharomyces pombe.</title>
        <authorList>
            <person name="Matsuyama A."/>
            <person name="Arai R."/>
            <person name="Yashiroda Y."/>
            <person name="Shirai A."/>
            <person name="Kamata A."/>
            <person name="Sekido S."/>
            <person name="Kobayashi Y."/>
            <person name="Hashimoto A."/>
            <person name="Hamamoto M."/>
            <person name="Hiraoka Y."/>
            <person name="Horinouchi S."/>
            <person name="Yoshida M."/>
        </authorList>
    </citation>
    <scope>SUBCELLULAR LOCATION [LARGE SCALE ANALYSIS]</scope>
</reference>
<comment type="function">
    <text evidence="1">Required for the final endonucleolytic cleavage of 20S pre-rRNA at site D in the cytoplasm, converting it into the mature 18S rRNA. Involved in normal export of the pre-40S particles from the nucleus to the cytoplasm (By similarity).</text>
</comment>
<comment type="catalytic activity">
    <reaction>
        <text>L-seryl-[protein] + ATP = O-phospho-L-seryl-[protein] + ADP + H(+)</text>
        <dbReference type="Rhea" id="RHEA:17989"/>
        <dbReference type="Rhea" id="RHEA-COMP:9863"/>
        <dbReference type="Rhea" id="RHEA-COMP:11604"/>
        <dbReference type="ChEBI" id="CHEBI:15378"/>
        <dbReference type="ChEBI" id="CHEBI:29999"/>
        <dbReference type="ChEBI" id="CHEBI:30616"/>
        <dbReference type="ChEBI" id="CHEBI:83421"/>
        <dbReference type="ChEBI" id="CHEBI:456216"/>
        <dbReference type="EC" id="2.7.11.1"/>
    </reaction>
</comment>
<comment type="catalytic activity">
    <reaction>
        <text>L-threonyl-[protein] + ATP = O-phospho-L-threonyl-[protein] + ADP + H(+)</text>
        <dbReference type="Rhea" id="RHEA:46608"/>
        <dbReference type="Rhea" id="RHEA-COMP:11060"/>
        <dbReference type="Rhea" id="RHEA-COMP:11605"/>
        <dbReference type="ChEBI" id="CHEBI:15378"/>
        <dbReference type="ChEBI" id="CHEBI:30013"/>
        <dbReference type="ChEBI" id="CHEBI:30616"/>
        <dbReference type="ChEBI" id="CHEBI:61977"/>
        <dbReference type="ChEBI" id="CHEBI:456216"/>
        <dbReference type="EC" id="2.7.11.1"/>
    </reaction>
</comment>
<comment type="cofactor">
    <cofactor evidence="4">
        <name>Mg(2+)</name>
        <dbReference type="ChEBI" id="CHEBI:18420"/>
    </cofactor>
</comment>
<comment type="subunit">
    <text evidence="1">Component of a late pre-40S ribosomal particle.</text>
</comment>
<comment type="subcellular location">
    <subcellularLocation>
        <location evidence="3">Cytoplasm</location>
    </subcellularLocation>
    <subcellularLocation>
        <location evidence="3">Nucleus</location>
    </subcellularLocation>
</comment>
<comment type="similarity">
    <text evidence="4">Belongs to the protein kinase superfamily. RIO-type Ser/Thr kinase family.</text>
</comment>
<evidence type="ECO:0000250" key="1"/>
<evidence type="ECO:0000256" key="2">
    <source>
        <dbReference type="SAM" id="MobiDB-lite"/>
    </source>
</evidence>
<evidence type="ECO:0000269" key="3">
    <source>
    </source>
</evidence>
<evidence type="ECO:0000305" key="4"/>